<sequence>MKFKKKNYTSQVDEMDCGCAALSMILKSYGTEKSLASLRLLAGTTIEGTSALGIKKAGEGLGFVVQVLRADASLFEMKKVPYPFIAHVIKNQKYPHYYVITGANKNSVFIADPDPTVKMTKLSKEVFLSEWTGISLFLSPTPSYQPTKEKTSSLLSFIPIITRQKKVILNIVIASFIVTLINILGSYYLQSMIDSYIPNALMGTLGIISVGLLLTYIIQQVLEFAKAFLLNVLSQRLAIDVILSYIRHIFQLPMSFFSTRRTGEITSRFSDASSILDAIASTILSLFLDLTIVLMTGLILGLQNMQLFLLVLLAIPLYIVVIIIFTPLFERQNHEVMQTNAILNSSIIEDINGIETIKALASEQERYQKIDYEFASYLKEAFTLQQSEAIQTAIKTTVQLVLNVLILWFGATLVMHQKITLGQLITFNALLSYFTNPITNIINLQTKLQKARVANERLNEVYLVPSEFEEKKTELSLSHFNLNMSEISYQYGFGRKVLSEIKLSIKENEKLTIVGISGSGKSTLVKLLVNFFQPTSGTITLGGIDLQQFDKHQLRRLINYLPQQPYIFTGSIMDNLLLGASEATSQEEIIRAVELAEIRADIEQMQLGYQTELSSDASSLSGGQKQRIALARALLSPAKILILDEATSNLDMITEKKILKNLLALDKTIIFIAHRLSVAEMSHRIIVIEQGKVIESGSHSELLAQNGFYAQLYHN</sequence>
<organism>
    <name type="scientific">Lactococcus lactis subsp. lactis (strain IL1403)</name>
    <name type="common">Streptococcus lactis</name>
    <dbReference type="NCBI Taxonomy" id="272623"/>
    <lineage>
        <taxon>Bacteria</taxon>
        <taxon>Bacillati</taxon>
        <taxon>Bacillota</taxon>
        <taxon>Bacilli</taxon>
        <taxon>Lactobacillales</taxon>
        <taxon>Streptococcaceae</taxon>
        <taxon>Lactococcus</taxon>
    </lineage>
</organism>
<gene>
    <name type="primary">lcnC</name>
    <name type="ordered locus">LL0079</name>
    <name type="ORF">L82520</name>
</gene>
<name>LCNCL_LACLA</name>
<keyword id="KW-0067">ATP-binding</keyword>
<keyword id="KW-0080">Bacteriocin transport</keyword>
<keyword id="KW-1003">Cell membrane</keyword>
<keyword id="KW-0378">Hydrolase</keyword>
<keyword id="KW-0472">Membrane</keyword>
<keyword id="KW-0547">Nucleotide-binding</keyword>
<keyword id="KW-0645">Protease</keyword>
<keyword id="KW-0653">Protein transport</keyword>
<keyword id="KW-1185">Reference proteome</keyword>
<keyword id="KW-0788">Thiol protease</keyword>
<keyword id="KW-1278">Translocase</keyword>
<keyword id="KW-0812">Transmembrane</keyword>
<keyword id="KW-1133">Transmembrane helix</keyword>
<keyword id="KW-0813">Transport</keyword>
<accession>Q9CJB8</accession>
<comment type="function">
    <text evidence="1">Involved in the export process of a bacteriocin lactococcin.</text>
</comment>
<comment type="subcellular location">
    <subcellularLocation>
        <location evidence="1">Cell membrane</location>
        <topology evidence="4">Multi-pass membrane protein</topology>
    </subcellularLocation>
</comment>
<comment type="similarity">
    <text evidence="5">Belongs to the ABC transporter superfamily. HlyB family.</text>
</comment>
<protein>
    <recommendedName>
        <fullName>Lactococcin transport/processing ATP-binding protein LcnC-like</fullName>
        <ecNumber>3.4.22.-</ecNumber>
        <ecNumber>7.-.-.-</ecNumber>
    </recommendedName>
</protein>
<dbReference type="EC" id="3.4.22.-"/>
<dbReference type="EC" id="7.-.-.-"/>
<dbReference type="EMBL" id="AE005176">
    <property type="protein sequence ID" value="AAK04177.1"/>
    <property type="molecule type" value="Genomic_DNA"/>
</dbReference>
<dbReference type="PIR" id="G86634">
    <property type="entry name" value="G86634"/>
</dbReference>
<dbReference type="RefSeq" id="NP_266235.1">
    <property type="nucleotide sequence ID" value="NC_002662.1"/>
</dbReference>
<dbReference type="RefSeq" id="WP_010905094.1">
    <property type="nucleotide sequence ID" value="NC_002662.1"/>
</dbReference>
<dbReference type="SMR" id="Q9CJB8"/>
<dbReference type="MEROPS" id="C39.001"/>
<dbReference type="PaxDb" id="272623-L82520"/>
<dbReference type="EnsemblBacteria" id="AAK04177">
    <property type="protein sequence ID" value="AAK04177"/>
    <property type="gene ID" value="L82520"/>
</dbReference>
<dbReference type="KEGG" id="lla:L82520"/>
<dbReference type="PATRIC" id="fig|272623.7.peg.88"/>
<dbReference type="eggNOG" id="COG2274">
    <property type="taxonomic scope" value="Bacteria"/>
</dbReference>
<dbReference type="HOGENOM" id="CLU_000604_84_3_9"/>
<dbReference type="OrthoDB" id="9762778at2"/>
<dbReference type="Proteomes" id="UP000002196">
    <property type="component" value="Chromosome"/>
</dbReference>
<dbReference type="GO" id="GO:0005886">
    <property type="term" value="C:plasma membrane"/>
    <property type="evidence" value="ECO:0007669"/>
    <property type="project" value="UniProtKB-SubCell"/>
</dbReference>
<dbReference type="GO" id="GO:0043214">
    <property type="term" value="F:ABC-type bacteriocin transporter activity"/>
    <property type="evidence" value="ECO:0007669"/>
    <property type="project" value="InterPro"/>
</dbReference>
<dbReference type="GO" id="GO:0005524">
    <property type="term" value="F:ATP binding"/>
    <property type="evidence" value="ECO:0007669"/>
    <property type="project" value="UniProtKB-KW"/>
</dbReference>
<dbReference type="GO" id="GO:0016887">
    <property type="term" value="F:ATP hydrolysis activity"/>
    <property type="evidence" value="ECO:0007669"/>
    <property type="project" value="InterPro"/>
</dbReference>
<dbReference type="GO" id="GO:0034040">
    <property type="term" value="F:ATPase-coupled lipid transmembrane transporter activity"/>
    <property type="evidence" value="ECO:0007669"/>
    <property type="project" value="TreeGrafter"/>
</dbReference>
<dbReference type="GO" id="GO:0008234">
    <property type="term" value="F:cysteine-type peptidase activity"/>
    <property type="evidence" value="ECO:0007669"/>
    <property type="project" value="UniProtKB-KW"/>
</dbReference>
<dbReference type="GO" id="GO:0015031">
    <property type="term" value="P:protein transport"/>
    <property type="evidence" value="ECO:0007669"/>
    <property type="project" value="UniProtKB-KW"/>
</dbReference>
<dbReference type="GO" id="GO:0006508">
    <property type="term" value="P:proteolysis"/>
    <property type="evidence" value="ECO:0007669"/>
    <property type="project" value="UniProtKB-KW"/>
</dbReference>
<dbReference type="CDD" id="cd18570">
    <property type="entry name" value="ABC_6TM_PCAT1_LagD_like"/>
    <property type="match status" value="1"/>
</dbReference>
<dbReference type="CDD" id="cd02418">
    <property type="entry name" value="Peptidase_C39B"/>
    <property type="match status" value="1"/>
</dbReference>
<dbReference type="FunFam" id="3.40.50.300:FF:000299">
    <property type="entry name" value="ABC transporter ATP-binding protein/permease"/>
    <property type="match status" value="1"/>
</dbReference>
<dbReference type="Gene3D" id="1.20.1560.10">
    <property type="entry name" value="ABC transporter type 1, transmembrane domain"/>
    <property type="match status" value="1"/>
</dbReference>
<dbReference type="Gene3D" id="3.90.70.10">
    <property type="entry name" value="Cysteine proteinases"/>
    <property type="match status" value="1"/>
</dbReference>
<dbReference type="Gene3D" id="3.40.50.300">
    <property type="entry name" value="P-loop containing nucleotide triphosphate hydrolases"/>
    <property type="match status" value="1"/>
</dbReference>
<dbReference type="InterPro" id="IPR003593">
    <property type="entry name" value="AAA+_ATPase"/>
</dbReference>
<dbReference type="InterPro" id="IPR011527">
    <property type="entry name" value="ABC1_TM_dom"/>
</dbReference>
<dbReference type="InterPro" id="IPR036640">
    <property type="entry name" value="ABC1_TM_sf"/>
</dbReference>
<dbReference type="InterPro" id="IPR003439">
    <property type="entry name" value="ABC_transporter-like_ATP-bd"/>
</dbReference>
<dbReference type="InterPro" id="IPR017871">
    <property type="entry name" value="ABC_transporter-like_CS"/>
</dbReference>
<dbReference type="InterPro" id="IPR027417">
    <property type="entry name" value="P-loop_NTPase"/>
</dbReference>
<dbReference type="InterPro" id="IPR005897">
    <property type="entry name" value="Pept_C39_ABC_bacteriocin"/>
</dbReference>
<dbReference type="InterPro" id="IPR005074">
    <property type="entry name" value="Peptidase_C39"/>
</dbReference>
<dbReference type="InterPro" id="IPR039421">
    <property type="entry name" value="Type_1_exporter"/>
</dbReference>
<dbReference type="NCBIfam" id="TIGR01193">
    <property type="entry name" value="bacteriocin_ABC"/>
    <property type="match status" value="1"/>
</dbReference>
<dbReference type="PANTHER" id="PTHR24221">
    <property type="entry name" value="ATP-BINDING CASSETTE SUB-FAMILY B"/>
    <property type="match status" value="1"/>
</dbReference>
<dbReference type="PANTHER" id="PTHR24221:SF654">
    <property type="entry name" value="ATP-BINDING CASSETTE SUB-FAMILY B MEMBER 6"/>
    <property type="match status" value="1"/>
</dbReference>
<dbReference type="Pfam" id="PF00664">
    <property type="entry name" value="ABC_membrane"/>
    <property type="match status" value="1"/>
</dbReference>
<dbReference type="Pfam" id="PF00005">
    <property type="entry name" value="ABC_tran"/>
    <property type="match status" value="1"/>
</dbReference>
<dbReference type="Pfam" id="PF03412">
    <property type="entry name" value="Peptidase_C39"/>
    <property type="match status" value="1"/>
</dbReference>
<dbReference type="SMART" id="SM00382">
    <property type="entry name" value="AAA"/>
    <property type="match status" value="1"/>
</dbReference>
<dbReference type="SUPFAM" id="SSF90123">
    <property type="entry name" value="ABC transporter transmembrane region"/>
    <property type="match status" value="1"/>
</dbReference>
<dbReference type="SUPFAM" id="SSF52540">
    <property type="entry name" value="P-loop containing nucleoside triphosphate hydrolases"/>
    <property type="match status" value="1"/>
</dbReference>
<dbReference type="PROSITE" id="PS50929">
    <property type="entry name" value="ABC_TM1F"/>
    <property type="match status" value="1"/>
</dbReference>
<dbReference type="PROSITE" id="PS00211">
    <property type="entry name" value="ABC_TRANSPORTER_1"/>
    <property type="match status" value="1"/>
</dbReference>
<dbReference type="PROSITE" id="PS50893">
    <property type="entry name" value="ABC_TRANSPORTER_2"/>
    <property type="match status" value="1"/>
</dbReference>
<dbReference type="PROSITE" id="PS50990">
    <property type="entry name" value="PEPTIDASE_C39"/>
    <property type="match status" value="1"/>
</dbReference>
<feature type="chain" id="PRO_0000092398" description="Lactococcin transport/processing ATP-binding protein LcnC-like">
    <location>
        <begin position="1"/>
        <end position="715"/>
    </location>
</feature>
<feature type="transmembrane region" description="Helical" evidence="4">
    <location>
        <begin position="167"/>
        <end position="187"/>
    </location>
</feature>
<feature type="transmembrane region" description="Helical" evidence="4">
    <location>
        <begin position="197"/>
        <end position="217"/>
    </location>
</feature>
<feature type="transmembrane region" description="Helical" evidence="4">
    <location>
        <begin position="237"/>
        <end position="257"/>
    </location>
</feature>
<feature type="transmembrane region" description="Helical" evidence="4">
    <location>
        <begin position="282"/>
        <end position="302"/>
    </location>
</feature>
<feature type="transmembrane region" description="Helical" evidence="4">
    <location>
        <begin position="307"/>
        <end position="327"/>
    </location>
</feature>
<feature type="domain" description="Peptidase C39" evidence="2">
    <location>
        <begin position="11"/>
        <end position="138"/>
    </location>
</feature>
<feature type="domain" description="ABC transmembrane type-1" evidence="4">
    <location>
        <begin position="168"/>
        <end position="450"/>
    </location>
</feature>
<feature type="domain" description="ABC transporter" evidence="2 3">
    <location>
        <begin position="482"/>
        <end position="715"/>
    </location>
</feature>
<feature type="active site" evidence="2">
    <location>
        <position position="17"/>
    </location>
</feature>
<feature type="binding site" evidence="2 3">
    <location>
        <begin position="515"/>
        <end position="522"/>
    </location>
    <ligand>
        <name>ATP</name>
        <dbReference type="ChEBI" id="CHEBI:30616"/>
    </ligand>
</feature>
<reference key="1">
    <citation type="journal article" date="2001" name="Genome Res.">
        <title>The complete genome sequence of the lactic acid bacterium Lactococcus lactis ssp. lactis IL1403.</title>
        <authorList>
            <person name="Bolotin A."/>
            <person name="Wincker P."/>
            <person name="Mauger S."/>
            <person name="Jaillon O."/>
            <person name="Malarme K."/>
            <person name="Weissenbach J."/>
            <person name="Ehrlich S.D."/>
            <person name="Sorokin A."/>
        </authorList>
    </citation>
    <scope>NUCLEOTIDE SEQUENCE [LARGE SCALE GENOMIC DNA]</scope>
    <source>
        <strain>IL1403</strain>
    </source>
</reference>
<evidence type="ECO:0000250" key="1"/>
<evidence type="ECO:0000255" key="2">
    <source>
        <dbReference type="PROSITE-ProRule" id="PRU00362"/>
    </source>
</evidence>
<evidence type="ECO:0000255" key="3">
    <source>
        <dbReference type="PROSITE-ProRule" id="PRU00434"/>
    </source>
</evidence>
<evidence type="ECO:0000255" key="4">
    <source>
        <dbReference type="PROSITE-ProRule" id="PRU00441"/>
    </source>
</evidence>
<evidence type="ECO:0000305" key="5"/>
<proteinExistence type="inferred from homology"/>